<evidence type="ECO:0000250" key="1"/>
<evidence type="ECO:0000305" key="2"/>
<name>RF1_BUCAI</name>
<dbReference type="EMBL" id="BA000003">
    <property type="protein sequence ID" value="BAB12888.1"/>
    <property type="molecule type" value="Genomic_DNA"/>
</dbReference>
<dbReference type="RefSeq" id="NP_240002.1">
    <property type="nucleotide sequence ID" value="NC_002528.1"/>
</dbReference>
<dbReference type="RefSeq" id="WP_009874128.1">
    <property type="nucleotide sequence ID" value="NZ_AP036055.1"/>
</dbReference>
<dbReference type="SMR" id="P57268"/>
<dbReference type="STRING" id="563178.BUAP5A_168"/>
<dbReference type="EnsemblBacteria" id="BAB12888">
    <property type="protein sequence ID" value="BAB12888"/>
    <property type="gene ID" value="BAB12888"/>
</dbReference>
<dbReference type="KEGG" id="buc:BU171"/>
<dbReference type="PATRIC" id="fig|107806.10.peg.182"/>
<dbReference type="eggNOG" id="COG0216">
    <property type="taxonomic scope" value="Bacteria"/>
</dbReference>
<dbReference type="HOGENOM" id="CLU_036856_0_1_6"/>
<dbReference type="Proteomes" id="UP000001806">
    <property type="component" value="Chromosome"/>
</dbReference>
<dbReference type="GO" id="GO:0005737">
    <property type="term" value="C:cytoplasm"/>
    <property type="evidence" value="ECO:0007669"/>
    <property type="project" value="UniProtKB-SubCell"/>
</dbReference>
<dbReference type="GO" id="GO:0016149">
    <property type="term" value="F:translation release factor activity, codon specific"/>
    <property type="evidence" value="ECO:0007669"/>
    <property type="project" value="UniProtKB-UniRule"/>
</dbReference>
<dbReference type="FunFam" id="3.30.160.20:FF:000004">
    <property type="entry name" value="Peptide chain release factor 1"/>
    <property type="match status" value="1"/>
</dbReference>
<dbReference type="FunFam" id="3.30.70.1660:FF:000002">
    <property type="entry name" value="Peptide chain release factor 1"/>
    <property type="match status" value="1"/>
</dbReference>
<dbReference type="FunFam" id="3.30.70.1660:FF:000004">
    <property type="entry name" value="Peptide chain release factor 1"/>
    <property type="match status" value="1"/>
</dbReference>
<dbReference type="Gene3D" id="3.30.160.20">
    <property type="match status" value="1"/>
</dbReference>
<dbReference type="Gene3D" id="3.30.70.1660">
    <property type="match status" value="1"/>
</dbReference>
<dbReference type="Gene3D" id="6.10.140.1950">
    <property type="match status" value="1"/>
</dbReference>
<dbReference type="HAMAP" id="MF_00093">
    <property type="entry name" value="Rel_fac_1"/>
    <property type="match status" value="1"/>
</dbReference>
<dbReference type="InterPro" id="IPR005139">
    <property type="entry name" value="PCRF"/>
</dbReference>
<dbReference type="InterPro" id="IPR000352">
    <property type="entry name" value="Pep_chain_release_fac_I"/>
</dbReference>
<dbReference type="InterPro" id="IPR045853">
    <property type="entry name" value="Pep_chain_release_fac_I_sf"/>
</dbReference>
<dbReference type="InterPro" id="IPR050057">
    <property type="entry name" value="Prokaryotic/Mito_RF"/>
</dbReference>
<dbReference type="InterPro" id="IPR004373">
    <property type="entry name" value="RF-1"/>
</dbReference>
<dbReference type="NCBIfam" id="TIGR00019">
    <property type="entry name" value="prfA"/>
    <property type="match status" value="1"/>
</dbReference>
<dbReference type="NCBIfam" id="NF001859">
    <property type="entry name" value="PRK00591.1"/>
    <property type="match status" value="1"/>
</dbReference>
<dbReference type="PANTHER" id="PTHR43804">
    <property type="entry name" value="LD18447P"/>
    <property type="match status" value="1"/>
</dbReference>
<dbReference type="PANTHER" id="PTHR43804:SF7">
    <property type="entry name" value="LD18447P"/>
    <property type="match status" value="1"/>
</dbReference>
<dbReference type="Pfam" id="PF03462">
    <property type="entry name" value="PCRF"/>
    <property type="match status" value="1"/>
</dbReference>
<dbReference type="Pfam" id="PF00472">
    <property type="entry name" value="RF-1"/>
    <property type="match status" value="1"/>
</dbReference>
<dbReference type="SMART" id="SM00937">
    <property type="entry name" value="PCRF"/>
    <property type="match status" value="1"/>
</dbReference>
<dbReference type="SUPFAM" id="SSF75620">
    <property type="entry name" value="Release factor"/>
    <property type="match status" value="1"/>
</dbReference>
<dbReference type="PROSITE" id="PS00745">
    <property type="entry name" value="RF_PROK_I"/>
    <property type="match status" value="1"/>
</dbReference>
<accession>P57268</accession>
<comment type="function">
    <text evidence="1">Peptide chain release factor 1 directs the termination of translation in response to the peptide chain termination codons UAG and UAA.</text>
</comment>
<comment type="subcellular location">
    <subcellularLocation>
        <location evidence="1">Cytoplasm</location>
    </subcellularLocation>
</comment>
<comment type="PTM">
    <text evidence="1">Methylated by PrmC. Methylation increases the termination efficiency of RF1 (By similarity).</text>
</comment>
<comment type="similarity">
    <text evidence="2">Belongs to the prokaryotic/mitochondrial release factor family.</text>
</comment>
<organism>
    <name type="scientific">Buchnera aphidicola subsp. Acyrthosiphon pisum (strain APS)</name>
    <name type="common">Acyrthosiphon pisum symbiotic bacterium</name>
    <dbReference type="NCBI Taxonomy" id="107806"/>
    <lineage>
        <taxon>Bacteria</taxon>
        <taxon>Pseudomonadati</taxon>
        <taxon>Pseudomonadota</taxon>
        <taxon>Gammaproteobacteria</taxon>
        <taxon>Enterobacterales</taxon>
        <taxon>Erwiniaceae</taxon>
        <taxon>Buchnera</taxon>
    </lineage>
</organism>
<gene>
    <name type="primary">prfA</name>
    <name type="ordered locus">BU171</name>
</gene>
<keyword id="KW-0963">Cytoplasm</keyword>
<keyword id="KW-0488">Methylation</keyword>
<keyword id="KW-0648">Protein biosynthesis</keyword>
<keyword id="KW-1185">Reference proteome</keyword>
<feature type="chain" id="PRO_0000177646" description="Peptide chain release factor 1">
    <location>
        <begin position="1"/>
        <end position="361"/>
    </location>
</feature>
<feature type="modified residue" description="N5-methylglutamine" evidence="1">
    <location>
        <position position="235"/>
    </location>
</feature>
<reference key="1">
    <citation type="journal article" date="2000" name="Nature">
        <title>Genome sequence of the endocellular bacterial symbiont of aphids Buchnera sp. APS.</title>
        <authorList>
            <person name="Shigenobu S."/>
            <person name="Watanabe H."/>
            <person name="Hattori M."/>
            <person name="Sakaki Y."/>
            <person name="Ishikawa H."/>
        </authorList>
    </citation>
    <scope>NUCLEOTIDE SEQUENCE [LARGE SCALE GENOMIC DNA]</scope>
    <source>
        <strain>APS</strain>
    </source>
</reference>
<protein>
    <recommendedName>
        <fullName>Peptide chain release factor 1</fullName>
        <shortName>RF-1</shortName>
    </recommendedName>
</protein>
<sequence length="361" mass="41262">MNNSILNKLKSLRNRYQEIEIMLTQKNVISNRENLKTLSKEYLKLSEIIKYFIEWEKLEVDIENVNILLNDVEIQGMAEEELYFFNKKKKALEKKINQLLLPEDPNDKHSCFIEIRSATGGDESSIFAGELFRMYLRYAESYSWKVEIMNTSESEKGGFKEIIAKITGRGACGRLKFESGGHRVQRVPETESQGRIHTSTCTVAVMPVTPKTEKEEINSSDLKIDTFRSSGAGGQHVNTTDSAIRITHIPTGNVVECQDERSQHKNKAKALSILSARVYAAKLEKDRQESSSMRKILLGTGERSDRNRTYNFPQNRITDHRINLSIYKLDEVLQGKLDLLIDPIIQEYQADMLSSLSKSES</sequence>
<proteinExistence type="inferred from homology"/>